<organism>
    <name type="scientific">Mycobacterium leprae (strain TN)</name>
    <dbReference type="NCBI Taxonomy" id="272631"/>
    <lineage>
        <taxon>Bacteria</taxon>
        <taxon>Bacillati</taxon>
        <taxon>Actinomycetota</taxon>
        <taxon>Actinomycetes</taxon>
        <taxon>Mycobacteriales</taxon>
        <taxon>Mycobacteriaceae</taxon>
        <taxon>Mycobacterium</taxon>
    </lineage>
</organism>
<proteinExistence type="inferred from homology"/>
<accession>Q9CD48</accession>
<protein>
    <recommendedName>
        <fullName evidence="1">Large ribosomal subunit protein bL25</fullName>
    </recommendedName>
    <alternativeName>
        <fullName evidence="3">50S ribosomal protein L25</fullName>
    </alternativeName>
    <alternativeName>
        <fullName evidence="1">General stress protein CTC</fullName>
    </alternativeName>
</protein>
<keyword id="KW-1185">Reference proteome</keyword>
<keyword id="KW-0687">Ribonucleoprotein</keyword>
<keyword id="KW-0689">Ribosomal protein</keyword>
<keyword id="KW-0694">RNA-binding</keyword>
<keyword id="KW-0699">rRNA-binding</keyword>
<gene>
    <name evidence="1" type="primary">rplY</name>
    <name evidence="1" type="synonym">ctc</name>
    <name type="ordered locus">ML0245</name>
</gene>
<feature type="chain" id="PRO_0000181568" description="Large ribosomal subunit protein bL25">
    <location>
        <begin position="1"/>
        <end position="215"/>
    </location>
</feature>
<feature type="region of interest" description="Disordered" evidence="2">
    <location>
        <begin position="1"/>
        <end position="29"/>
    </location>
</feature>
<feature type="region of interest" description="Disordered" evidence="2">
    <location>
        <begin position="190"/>
        <end position="215"/>
    </location>
</feature>
<feature type="compositionally biased region" description="Polar residues" evidence="2">
    <location>
        <begin position="1"/>
        <end position="19"/>
    </location>
</feature>
<feature type="compositionally biased region" description="Polar residues" evidence="2">
    <location>
        <begin position="206"/>
        <end position="215"/>
    </location>
</feature>
<sequence>MAKSTVNKLSVSVRTNTGKGASRRARRDGKVPAVLYGHGEEPQHLELPAHAFSAVLRHVGTNAVLTLEVAGKEQLALTKAIDVHPIRHTIMHADLLVVRSGEKIVVEVPVEVEGDAGPDILVTQETTSIEIEAEALSIPEQLTMSIEGAEPGTQFTARQIPLPVGVTLVSDPEMLVVNVVNAPTDAQTKAKYAGEAHEAPEVGTAENKTAATESE</sequence>
<dbReference type="EMBL" id="AL583917">
    <property type="protein sequence ID" value="CAC29753.1"/>
    <property type="molecule type" value="Genomic_DNA"/>
</dbReference>
<dbReference type="PIR" id="E86939">
    <property type="entry name" value="E86939"/>
</dbReference>
<dbReference type="RefSeq" id="NP_301304.1">
    <property type="nucleotide sequence ID" value="NC_002677.1"/>
</dbReference>
<dbReference type="RefSeq" id="WP_010907628.1">
    <property type="nucleotide sequence ID" value="NC_002677.1"/>
</dbReference>
<dbReference type="SMR" id="Q9CD48"/>
<dbReference type="STRING" id="272631.gene:17574062"/>
<dbReference type="KEGG" id="mle:ML0245"/>
<dbReference type="PATRIC" id="fig|272631.5.peg.379"/>
<dbReference type="Leproma" id="ML0245"/>
<dbReference type="eggNOG" id="COG1825">
    <property type="taxonomic scope" value="Bacteria"/>
</dbReference>
<dbReference type="HOGENOM" id="CLU_075939_1_0_11"/>
<dbReference type="OrthoDB" id="5242980at2"/>
<dbReference type="Proteomes" id="UP000000806">
    <property type="component" value="Chromosome"/>
</dbReference>
<dbReference type="GO" id="GO:0022625">
    <property type="term" value="C:cytosolic large ribosomal subunit"/>
    <property type="evidence" value="ECO:0007669"/>
    <property type="project" value="TreeGrafter"/>
</dbReference>
<dbReference type="GO" id="GO:0008097">
    <property type="term" value="F:5S rRNA binding"/>
    <property type="evidence" value="ECO:0007669"/>
    <property type="project" value="InterPro"/>
</dbReference>
<dbReference type="GO" id="GO:0003735">
    <property type="term" value="F:structural constituent of ribosome"/>
    <property type="evidence" value="ECO:0007669"/>
    <property type="project" value="InterPro"/>
</dbReference>
<dbReference type="GO" id="GO:0006412">
    <property type="term" value="P:translation"/>
    <property type="evidence" value="ECO:0007669"/>
    <property type="project" value="UniProtKB-UniRule"/>
</dbReference>
<dbReference type="CDD" id="cd00495">
    <property type="entry name" value="Ribosomal_L25_TL5_CTC"/>
    <property type="match status" value="1"/>
</dbReference>
<dbReference type="Gene3D" id="2.170.120.20">
    <property type="entry name" value="Ribosomal protein L25, beta domain"/>
    <property type="match status" value="1"/>
</dbReference>
<dbReference type="Gene3D" id="2.40.240.10">
    <property type="entry name" value="Ribosomal Protein L25, Chain P"/>
    <property type="match status" value="1"/>
</dbReference>
<dbReference type="HAMAP" id="MF_01334">
    <property type="entry name" value="Ribosomal_bL25_CTC"/>
    <property type="match status" value="1"/>
</dbReference>
<dbReference type="InterPro" id="IPR020056">
    <property type="entry name" value="Rbsml_bL25/Gln-tRNA_synth_N"/>
</dbReference>
<dbReference type="InterPro" id="IPR011035">
    <property type="entry name" value="Ribosomal_bL25/Gln-tRNA_synth"/>
</dbReference>
<dbReference type="InterPro" id="IPR020057">
    <property type="entry name" value="Ribosomal_bL25_b-dom"/>
</dbReference>
<dbReference type="InterPro" id="IPR037121">
    <property type="entry name" value="Ribosomal_bL25_C"/>
</dbReference>
<dbReference type="InterPro" id="IPR001021">
    <property type="entry name" value="Ribosomal_bL25_long"/>
</dbReference>
<dbReference type="InterPro" id="IPR029751">
    <property type="entry name" value="Ribosomal_L25_dom"/>
</dbReference>
<dbReference type="InterPro" id="IPR020930">
    <property type="entry name" value="Ribosomal_uL5_bac-type"/>
</dbReference>
<dbReference type="NCBIfam" id="TIGR00731">
    <property type="entry name" value="bL25_bact_ctc"/>
    <property type="match status" value="1"/>
</dbReference>
<dbReference type="NCBIfam" id="NF004131">
    <property type="entry name" value="PRK05618.2-1"/>
    <property type="match status" value="1"/>
</dbReference>
<dbReference type="PANTHER" id="PTHR33284">
    <property type="entry name" value="RIBOSOMAL PROTEIN L25/GLN-TRNA SYNTHETASE, ANTI-CODON-BINDING DOMAIN-CONTAINING PROTEIN"/>
    <property type="match status" value="1"/>
</dbReference>
<dbReference type="PANTHER" id="PTHR33284:SF1">
    <property type="entry name" value="RIBOSOMAL PROTEIN L25_GLN-TRNA SYNTHETASE, ANTI-CODON-BINDING DOMAIN-CONTAINING PROTEIN"/>
    <property type="match status" value="1"/>
</dbReference>
<dbReference type="Pfam" id="PF01386">
    <property type="entry name" value="Ribosomal_L25p"/>
    <property type="match status" value="1"/>
</dbReference>
<dbReference type="Pfam" id="PF14693">
    <property type="entry name" value="Ribosomal_TL5_C"/>
    <property type="match status" value="1"/>
</dbReference>
<dbReference type="SUPFAM" id="SSF50715">
    <property type="entry name" value="Ribosomal protein L25-like"/>
    <property type="match status" value="1"/>
</dbReference>
<name>RL25_MYCLE</name>
<evidence type="ECO:0000255" key="1">
    <source>
        <dbReference type="HAMAP-Rule" id="MF_01334"/>
    </source>
</evidence>
<evidence type="ECO:0000256" key="2">
    <source>
        <dbReference type="SAM" id="MobiDB-lite"/>
    </source>
</evidence>
<evidence type="ECO:0000305" key="3"/>
<reference key="1">
    <citation type="journal article" date="2001" name="Nature">
        <title>Massive gene decay in the leprosy bacillus.</title>
        <authorList>
            <person name="Cole S.T."/>
            <person name="Eiglmeier K."/>
            <person name="Parkhill J."/>
            <person name="James K.D."/>
            <person name="Thomson N.R."/>
            <person name="Wheeler P.R."/>
            <person name="Honore N."/>
            <person name="Garnier T."/>
            <person name="Churcher C.M."/>
            <person name="Harris D.E."/>
            <person name="Mungall K.L."/>
            <person name="Basham D."/>
            <person name="Brown D."/>
            <person name="Chillingworth T."/>
            <person name="Connor R."/>
            <person name="Davies R.M."/>
            <person name="Devlin K."/>
            <person name="Duthoy S."/>
            <person name="Feltwell T."/>
            <person name="Fraser A."/>
            <person name="Hamlin N."/>
            <person name="Holroyd S."/>
            <person name="Hornsby T."/>
            <person name="Jagels K."/>
            <person name="Lacroix C."/>
            <person name="Maclean J."/>
            <person name="Moule S."/>
            <person name="Murphy L.D."/>
            <person name="Oliver K."/>
            <person name="Quail M.A."/>
            <person name="Rajandream M.A."/>
            <person name="Rutherford K.M."/>
            <person name="Rutter S."/>
            <person name="Seeger K."/>
            <person name="Simon S."/>
            <person name="Simmonds M."/>
            <person name="Skelton J."/>
            <person name="Squares R."/>
            <person name="Squares S."/>
            <person name="Stevens K."/>
            <person name="Taylor K."/>
            <person name="Whitehead S."/>
            <person name="Woodward J.R."/>
            <person name="Barrell B.G."/>
        </authorList>
    </citation>
    <scope>NUCLEOTIDE SEQUENCE [LARGE SCALE GENOMIC DNA]</scope>
    <source>
        <strain>TN</strain>
    </source>
</reference>
<comment type="function">
    <text evidence="1">This is one of the proteins that binds to the 5S RNA in the ribosome where it forms part of the central protuberance.</text>
</comment>
<comment type="subunit">
    <text evidence="1">Part of the 50S ribosomal subunit; part of the 5S rRNA/L5/L18/L25 subcomplex. Contacts the 5S rRNA. Binds to the 5S rRNA independently of L5 and L18.</text>
</comment>
<comment type="similarity">
    <text evidence="1">Belongs to the bacterial ribosomal protein bL25 family. CTC subfamily.</text>
</comment>